<reference key="1">
    <citation type="journal article" date="2014" name="Stand. Genomic Sci.">
        <title>Complete genome sequence of Burkholderia phymatum STM815(T), a broad host range and efficient nitrogen-fixing symbiont of Mimosa species.</title>
        <authorList>
            <person name="Moulin L."/>
            <person name="Klonowska A."/>
            <person name="Caroline B."/>
            <person name="Booth K."/>
            <person name="Vriezen J.A."/>
            <person name="Melkonian R."/>
            <person name="James E.K."/>
            <person name="Young J.P."/>
            <person name="Bena G."/>
            <person name="Hauser L."/>
            <person name="Land M."/>
            <person name="Kyrpides N."/>
            <person name="Bruce D."/>
            <person name="Chain P."/>
            <person name="Copeland A."/>
            <person name="Pitluck S."/>
            <person name="Woyke T."/>
            <person name="Lizotte-Waniewski M."/>
            <person name="Bristow J."/>
            <person name="Riley M."/>
        </authorList>
    </citation>
    <scope>NUCLEOTIDE SEQUENCE [LARGE SCALE GENOMIC DNA]</scope>
    <source>
        <strain>DSM 17167 / CIP 108236 / LMG 21445 / STM815</strain>
    </source>
</reference>
<protein>
    <recommendedName>
        <fullName evidence="1">Potassium-transporting ATPase KdpC subunit</fullName>
    </recommendedName>
    <alternativeName>
        <fullName evidence="1">ATP phosphohydrolase [potassium-transporting] C chain</fullName>
    </alternativeName>
    <alternativeName>
        <fullName evidence="1">Potassium-binding and translocating subunit C</fullName>
    </alternativeName>
    <alternativeName>
        <fullName evidence="1">Potassium-translocating ATPase C chain</fullName>
    </alternativeName>
</protein>
<comment type="function">
    <text evidence="1">Part of the high-affinity ATP-driven potassium transport (or Kdp) system, which catalyzes the hydrolysis of ATP coupled with the electrogenic transport of potassium into the cytoplasm. This subunit acts as a catalytic chaperone that increases the ATP-binding affinity of the ATP-hydrolyzing subunit KdpB by the formation of a transient KdpB/KdpC/ATP ternary complex.</text>
</comment>
<comment type="subunit">
    <text evidence="1">The system is composed of three essential subunits: KdpA, KdpB and KdpC.</text>
</comment>
<comment type="subcellular location">
    <subcellularLocation>
        <location evidence="1">Cell inner membrane</location>
        <topology evidence="1">Single-pass membrane protein</topology>
    </subcellularLocation>
</comment>
<comment type="similarity">
    <text evidence="1">Belongs to the KdpC family.</text>
</comment>
<proteinExistence type="inferred from homology"/>
<dbReference type="EMBL" id="CP001043">
    <property type="protein sequence ID" value="ACC71233.1"/>
    <property type="molecule type" value="Genomic_DNA"/>
</dbReference>
<dbReference type="RefSeq" id="WP_012401440.1">
    <property type="nucleotide sequence ID" value="NC_010622.1"/>
</dbReference>
<dbReference type="SMR" id="B2JE25"/>
<dbReference type="STRING" id="391038.Bphy_2055"/>
<dbReference type="KEGG" id="bph:Bphy_2055"/>
<dbReference type="eggNOG" id="COG2156">
    <property type="taxonomic scope" value="Bacteria"/>
</dbReference>
<dbReference type="HOGENOM" id="CLU_077094_2_0_4"/>
<dbReference type="OrthoDB" id="9788285at2"/>
<dbReference type="Proteomes" id="UP000001192">
    <property type="component" value="Chromosome 1"/>
</dbReference>
<dbReference type="GO" id="GO:0005886">
    <property type="term" value="C:plasma membrane"/>
    <property type="evidence" value="ECO:0007669"/>
    <property type="project" value="UniProtKB-SubCell"/>
</dbReference>
<dbReference type="GO" id="GO:0005524">
    <property type="term" value="F:ATP binding"/>
    <property type="evidence" value="ECO:0007669"/>
    <property type="project" value="UniProtKB-UniRule"/>
</dbReference>
<dbReference type="GO" id="GO:0008556">
    <property type="term" value="F:P-type potassium transmembrane transporter activity"/>
    <property type="evidence" value="ECO:0007669"/>
    <property type="project" value="InterPro"/>
</dbReference>
<dbReference type="HAMAP" id="MF_00276">
    <property type="entry name" value="KdpC"/>
    <property type="match status" value="1"/>
</dbReference>
<dbReference type="InterPro" id="IPR003820">
    <property type="entry name" value="KdpC"/>
</dbReference>
<dbReference type="NCBIfam" id="TIGR00681">
    <property type="entry name" value="kdpC"/>
    <property type="match status" value="1"/>
</dbReference>
<dbReference type="NCBIfam" id="NF001454">
    <property type="entry name" value="PRK00315.1"/>
    <property type="match status" value="1"/>
</dbReference>
<dbReference type="PANTHER" id="PTHR30042">
    <property type="entry name" value="POTASSIUM-TRANSPORTING ATPASE C CHAIN"/>
    <property type="match status" value="1"/>
</dbReference>
<dbReference type="PANTHER" id="PTHR30042:SF2">
    <property type="entry name" value="POTASSIUM-TRANSPORTING ATPASE KDPC SUBUNIT"/>
    <property type="match status" value="1"/>
</dbReference>
<dbReference type="Pfam" id="PF02669">
    <property type="entry name" value="KdpC"/>
    <property type="match status" value="1"/>
</dbReference>
<dbReference type="PIRSF" id="PIRSF001296">
    <property type="entry name" value="K_ATPase_KdpC"/>
    <property type="match status" value="1"/>
</dbReference>
<organism>
    <name type="scientific">Paraburkholderia phymatum (strain DSM 17167 / CIP 108236 / LMG 21445 / STM815)</name>
    <name type="common">Burkholderia phymatum</name>
    <dbReference type="NCBI Taxonomy" id="391038"/>
    <lineage>
        <taxon>Bacteria</taxon>
        <taxon>Pseudomonadati</taxon>
        <taxon>Pseudomonadota</taxon>
        <taxon>Betaproteobacteria</taxon>
        <taxon>Burkholderiales</taxon>
        <taxon>Burkholderiaceae</taxon>
        <taxon>Paraburkholderia</taxon>
    </lineage>
</organism>
<gene>
    <name evidence="1" type="primary">kdpC</name>
    <name type="ordered locus">Bphy_2055</name>
</gene>
<name>KDPC_PARP8</name>
<feature type="chain" id="PRO_1000114717" description="Potassium-transporting ATPase KdpC subunit">
    <location>
        <begin position="1"/>
        <end position="193"/>
    </location>
</feature>
<feature type="transmembrane region" description="Helical" evidence="1">
    <location>
        <begin position="7"/>
        <end position="27"/>
    </location>
</feature>
<sequence>MKSLFRPMIVIFAVLAALTGLAYPAVMTAFGQTVFHNEANGSMIAKNGKVVGSRLIGQQFDAPQYFWGRLSATSPMPYNAQGSSGSNLGPINPALADEVKGRLAALQAAGHQPAGVAVPVDLVTSSGSGLDPEISPAAAAYQIERVAAARKMNVSDVAAIVDRYTRGRQFGVFGEARVNVLELNLALDDAQRG</sequence>
<keyword id="KW-0067">ATP-binding</keyword>
<keyword id="KW-0997">Cell inner membrane</keyword>
<keyword id="KW-1003">Cell membrane</keyword>
<keyword id="KW-0406">Ion transport</keyword>
<keyword id="KW-0472">Membrane</keyword>
<keyword id="KW-0547">Nucleotide-binding</keyword>
<keyword id="KW-0630">Potassium</keyword>
<keyword id="KW-0633">Potassium transport</keyword>
<keyword id="KW-1185">Reference proteome</keyword>
<keyword id="KW-0812">Transmembrane</keyword>
<keyword id="KW-1133">Transmembrane helix</keyword>
<keyword id="KW-0813">Transport</keyword>
<evidence type="ECO:0000255" key="1">
    <source>
        <dbReference type="HAMAP-Rule" id="MF_00276"/>
    </source>
</evidence>
<accession>B2JE25</accession>